<reference key="1">
    <citation type="submission" date="2007-06" db="EMBL/GenBank/DDBJ databases">
        <title>Complete sequence of Methanococcus maripaludis C7.</title>
        <authorList>
            <consortium name="US DOE Joint Genome Institute"/>
            <person name="Copeland A."/>
            <person name="Lucas S."/>
            <person name="Lapidus A."/>
            <person name="Barry K."/>
            <person name="Glavina del Rio T."/>
            <person name="Dalin E."/>
            <person name="Tice H."/>
            <person name="Pitluck S."/>
            <person name="Clum A."/>
            <person name="Schmutz J."/>
            <person name="Larimer F."/>
            <person name="Land M."/>
            <person name="Hauser L."/>
            <person name="Kyrpides N."/>
            <person name="Anderson I."/>
            <person name="Sieprawska-Lupa M."/>
            <person name="Whitman W.B."/>
            <person name="Richardson P."/>
        </authorList>
    </citation>
    <scope>NUCLEOTIDE SEQUENCE [LARGE SCALE GENOMIC DNA]</scope>
    <source>
        <strain>C7 / ATCC BAA-1331</strain>
    </source>
</reference>
<comment type="function">
    <text evidence="1">Possesses two activities: a DNA synthesis (polymerase) and an exonucleolytic activity that degrades single-stranded DNA in the 3'- to 5'-direction. Has a template-primer preference which is characteristic of a replicative DNA polymerase (By similarity).</text>
</comment>
<comment type="catalytic activity">
    <reaction evidence="2">
        <text>DNA(n) + a 2'-deoxyribonucleoside 5'-triphosphate = DNA(n+1) + diphosphate</text>
        <dbReference type="Rhea" id="RHEA:22508"/>
        <dbReference type="Rhea" id="RHEA-COMP:17339"/>
        <dbReference type="Rhea" id="RHEA-COMP:17340"/>
        <dbReference type="ChEBI" id="CHEBI:33019"/>
        <dbReference type="ChEBI" id="CHEBI:61560"/>
        <dbReference type="ChEBI" id="CHEBI:173112"/>
        <dbReference type="EC" id="2.7.7.7"/>
    </reaction>
</comment>
<comment type="catalytic activity">
    <reaction evidence="2">
        <text>Exonucleolytic cleavage in the 3'- to 5'-direction to yield nucleoside 5'-phosphates.</text>
        <dbReference type="EC" id="3.1.11.1"/>
    </reaction>
</comment>
<comment type="subunit">
    <text evidence="2">Heterodimer of a large subunit and a small subunit.</text>
</comment>
<comment type="similarity">
    <text evidence="2">Belongs to the archaeal DNA polymerase II family.</text>
</comment>
<name>DP2L_METM7</name>
<protein>
    <recommendedName>
        <fullName evidence="2">DNA polymerase II large subunit</fullName>
        <shortName evidence="2">Pol II</shortName>
        <ecNumber evidence="2">2.7.7.7</ecNumber>
    </recommendedName>
    <alternativeName>
        <fullName evidence="2">Exodeoxyribonuclease large subunit</fullName>
        <ecNumber evidence="2">3.1.11.1</ecNumber>
    </alternativeName>
</protein>
<keyword id="KW-0235">DNA replication</keyword>
<keyword id="KW-0238">DNA-binding</keyword>
<keyword id="KW-0239">DNA-directed DNA polymerase</keyword>
<keyword id="KW-0269">Exonuclease</keyword>
<keyword id="KW-0378">Hydrolase</keyword>
<keyword id="KW-0511">Multifunctional enzyme</keyword>
<keyword id="KW-0540">Nuclease</keyword>
<keyword id="KW-0548">Nucleotidyltransferase</keyword>
<keyword id="KW-0808">Transferase</keyword>
<organism>
    <name type="scientific">Methanococcus maripaludis (strain C7 / ATCC BAA-1331)</name>
    <dbReference type="NCBI Taxonomy" id="426368"/>
    <lineage>
        <taxon>Archaea</taxon>
        <taxon>Methanobacteriati</taxon>
        <taxon>Methanobacteriota</taxon>
        <taxon>Methanomada group</taxon>
        <taxon>Methanococci</taxon>
        <taxon>Methanococcales</taxon>
        <taxon>Methanococcaceae</taxon>
        <taxon>Methanococcus</taxon>
    </lineage>
</organism>
<feature type="chain" id="PRO_1000019390" description="DNA polymerase II large subunit">
    <location>
        <begin position="1"/>
        <end position="1131"/>
    </location>
</feature>
<gene>
    <name evidence="2" type="primary">polC</name>
    <name type="ordered locus">MmarC7_1023</name>
</gene>
<dbReference type="EC" id="2.7.7.7" evidence="2"/>
<dbReference type="EC" id="3.1.11.1" evidence="2"/>
<dbReference type="EMBL" id="CP000745">
    <property type="protein sequence ID" value="ABR66090.1"/>
    <property type="molecule type" value="Genomic_DNA"/>
</dbReference>
<dbReference type="SMR" id="A6VI14"/>
<dbReference type="STRING" id="426368.MmarC7_1023"/>
<dbReference type="KEGG" id="mmz:MmarC7_1023"/>
<dbReference type="eggNOG" id="arCOG04447">
    <property type="taxonomic scope" value="Archaea"/>
</dbReference>
<dbReference type="HOGENOM" id="CLU_001154_0_0_2"/>
<dbReference type="OrthoDB" id="7529at2157"/>
<dbReference type="GO" id="GO:0003677">
    <property type="term" value="F:DNA binding"/>
    <property type="evidence" value="ECO:0007669"/>
    <property type="project" value="UniProtKB-UniRule"/>
</dbReference>
<dbReference type="GO" id="GO:0003887">
    <property type="term" value="F:DNA-directed DNA polymerase activity"/>
    <property type="evidence" value="ECO:0007669"/>
    <property type="project" value="UniProtKB-UniRule"/>
</dbReference>
<dbReference type="GO" id="GO:0008310">
    <property type="term" value="F:single-stranded DNA 3'-5' DNA exonuclease activity"/>
    <property type="evidence" value="ECO:0007669"/>
    <property type="project" value="UniProtKB-EC"/>
</dbReference>
<dbReference type="GO" id="GO:0006308">
    <property type="term" value="P:DNA catabolic process"/>
    <property type="evidence" value="ECO:0007669"/>
    <property type="project" value="UniProtKB-UniRule"/>
</dbReference>
<dbReference type="GO" id="GO:0006261">
    <property type="term" value="P:DNA-templated DNA replication"/>
    <property type="evidence" value="ECO:0007669"/>
    <property type="project" value="UniProtKB-UniRule"/>
</dbReference>
<dbReference type="HAMAP" id="MF_00324">
    <property type="entry name" value="DNApol_II_L_arch"/>
    <property type="match status" value="1"/>
</dbReference>
<dbReference type="InterPro" id="IPR004475">
    <property type="entry name" value="PolC_DP2"/>
</dbReference>
<dbReference type="InterPro" id="IPR056172">
    <property type="entry name" value="PolC_DP2_cat_dom"/>
</dbReference>
<dbReference type="InterPro" id="IPR056171">
    <property type="entry name" value="PolC_DP2_central_dom"/>
</dbReference>
<dbReference type="InterPro" id="IPR016033">
    <property type="entry name" value="PolC_DP2_N"/>
</dbReference>
<dbReference type="NCBIfam" id="TIGR00354">
    <property type="entry name" value="polC"/>
    <property type="match status" value="1"/>
</dbReference>
<dbReference type="NCBIfam" id="NF003103">
    <property type="entry name" value="PRK04023.1"/>
    <property type="match status" value="1"/>
</dbReference>
<dbReference type="PANTHER" id="PTHR42210">
    <property type="entry name" value="DNA POLYMERASE II LARGE SUBUNIT"/>
    <property type="match status" value="1"/>
</dbReference>
<dbReference type="PANTHER" id="PTHR42210:SF1">
    <property type="entry name" value="DNA POLYMERASE II LARGE SUBUNIT"/>
    <property type="match status" value="1"/>
</dbReference>
<dbReference type="Pfam" id="PF24846">
    <property type="entry name" value="PolC_DP2_cat"/>
    <property type="match status" value="1"/>
</dbReference>
<dbReference type="Pfam" id="PF24844">
    <property type="entry name" value="PolC_DP2_central"/>
    <property type="match status" value="1"/>
</dbReference>
<dbReference type="Pfam" id="PF03833">
    <property type="entry name" value="PolC_DP2_N"/>
    <property type="match status" value="1"/>
</dbReference>
<dbReference type="PIRSF" id="PIRSF016275">
    <property type="entry name" value="PolC_DP2"/>
    <property type="match status" value="1"/>
</dbReference>
<evidence type="ECO:0000250" key="1"/>
<evidence type="ECO:0000255" key="2">
    <source>
        <dbReference type="HAMAP-Rule" id="MF_00324"/>
    </source>
</evidence>
<proteinExistence type="inferred from homology"/>
<sequence length="1131" mass="128380">MLHVSASKGMTEYFKNILDNVTELYTLADDCRKSGYDVTDHVEIPLAKDMADRVEGIVGPKNVAERIRELVSDLGKEPAALEIAKEIVEGKFGEFGREVGAEQAVRTALAVITEGIVAAPLEGIAHVKIKKNNDSGEYLAIYFAGPIRSAGGTAQALAVLVGDYVRKNMGLDKFKPTEDEVERYGEEVDLYQSEVTTFQYQPKAEEIRAAVRNISVEITGEATDDVEVSGHRDLPRVETNQIRGGALLALVEGVLLKAPKILRHVDKLGIEGWDWLKELKSKKEEVIEEIEEEKDDFNYEEEEDLSQYEDYEVEAVTKFIGEVIAGRPVFSHPSKKGGFRLRYGRSRNTGFATDGFHPAIMYLVDDFMAVGTQLKTERPGKATCVVPVDSIEGPIVRLKDKSVLKIDTVEKAKQYRDDVEEILFLGDILVNYGDFLENNHTILPSSWCTEWYEKILKSENLEYKKEFIENPDQKEAVNYAKLTKTPLHPKYTYFWHDISKDNINVLRNWIIGGKYNESNDSWEVTYDSENPEISNAKRYLELIGCPHTVTGEKLEIFEYYPLLYSLGYDFDEKRDIVEEIEEKLQNTKNNMHFINTIAPFEIRRNAYIYVGARMGRPEKAASRKMKPPVNGLFPIGNAGALVRLINKAVEEGKTDEIEISNVKCSCGNVSLYRTCPFCGNSVEPSGPSRIKLPIKEYWYKALENLKINKAGDVKCIKGMTSKDKIIEPLEKAILRAKNDIYVFKDGTTRFDCTDVPVTHFRPVEIHVGIEKLKSLGYLKDIHGNSLENEDQVLELKVQDVIVPESCMDYFFNVSKFIDDLLEKYYKKDRFYNVNKRDDLVGHLIIGMAPHTSAGMVGRIIGYSNANVGYAHPYFHASKRRNCDGDEDAFFLLLDAFMNFSKRFLPDKRGGQMDAPLVLTTILDPKEVDGEVHNMDSMWEYPIEFYEKSLEGIAPKEIKKIMQTVEDRLDKDSQYEGIGYTHETLKIDEGPLVCAYKTLGSMMEKTSAQLAVAKKIRATDERDVAEKVIQSHFVPDLIGNLRAFSRQGVRCKCGAKYRRMPLKGVCRKCGSRLILTVSKGAVEKYMDVSQTMAEKYEASDYIKQRLEIIRSGIDSLFVNDKRKQVKIEDFFK</sequence>
<accession>A6VI14</accession>